<dbReference type="EMBL" id="CP000939">
    <property type="protein sequence ID" value="ACA44128.1"/>
    <property type="molecule type" value="Genomic_DNA"/>
</dbReference>
<dbReference type="RefSeq" id="WP_015957575.1">
    <property type="nucleotide sequence ID" value="NC_010516.1"/>
</dbReference>
<dbReference type="SMR" id="B1IM68"/>
<dbReference type="KEGG" id="cbb:CLD_2840"/>
<dbReference type="HOGENOM" id="CLU_002472_3_0_9"/>
<dbReference type="Proteomes" id="UP000008541">
    <property type="component" value="Chromosome"/>
</dbReference>
<dbReference type="GO" id="GO:0005829">
    <property type="term" value="C:cytosol"/>
    <property type="evidence" value="ECO:0007669"/>
    <property type="project" value="TreeGrafter"/>
</dbReference>
<dbReference type="GO" id="GO:0005524">
    <property type="term" value="F:ATP binding"/>
    <property type="evidence" value="ECO:0007669"/>
    <property type="project" value="UniProtKB-UniRule"/>
</dbReference>
<dbReference type="GO" id="GO:0140664">
    <property type="term" value="F:ATP-dependent DNA damage sensor activity"/>
    <property type="evidence" value="ECO:0007669"/>
    <property type="project" value="InterPro"/>
</dbReference>
<dbReference type="GO" id="GO:0003684">
    <property type="term" value="F:damaged DNA binding"/>
    <property type="evidence" value="ECO:0007669"/>
    <property type="project" value="UniProtKB-UniRule"/>
</dbReference>
<dbReference type="GO" id="GO:0030983">
    <property type="term" value="F:mismatched DNA binding"/>
    <property type="evidence" value="ECO:0007669"/>
    <property type="project" value="InterPro"/>
</dbReference>
<dbReference type="GO" id="GO:0006298">
    <property type="term" value="P:mismatch repair"/>
    <property type="evidence" value="ECO:0007669"/>
    <property type="project" value="UniProtKB-UniRule"/>
</dbReference>
<dbReference type="CDD" id="cd03284">
    <property type="entry name" value="ABC_MutS1"/>
    <property type="match status" value="1"/>
</dbReference>
<dbReference type="FunFam" id="1.10.1420.10:FF:000007">
    <property type="entry name" value="DNA mismatch repair protein MutS"/>
    <property type="match status" value="1"/>
</dbReference>
<dbReference type="FunFam" id="3.40.1170.10:FF:000001">
    <property type="entry name" value="DNA mismatch repair protein MutS"/>
    <property type="match status" value="1"/>
</dbReference>
<dbReference type="FunFam" id="3.40.50.300:FF:001579">
    <property type="entry name" value="DNA mismatch repair protein MutS"/>
    <property type="match status" value="1"/>
</dbReference>
<dbReference type="Gene3D" id="1.10.1420.10">
    <property type="match status" value="2"/>
</dbReference>
<dbReference type="Gene3D" id="3.40.1170.10">
    <property type="entry name" value="DNA repair protein MutS, domain I"/>
    <property type="match status" value="1"/>
</dbReference>
<dbReference type="Gene3D" id="3.30.420.110">
    <property type="entry name" value="MutS, connector domain"/>
    <property type="match status" value="1"/>
</dbReference>
<dbReference type="Gene3D" id="3.40.50.300">
    <property type="entry name" value="P-loop containing nucleotide triphosphate hydrolases"/>
    <property type="match status" value="1"/>
</dbReference>
<dbReference type="HAMAP" id="MF_00096">
    <property type="entry name" value="MutS"/>
    <property type="match status" value="1"/>
</dbReference>
<dbReference type="InterPro" id="IPR005748">
    <property type="entry name" value="DNA_mismatch_repair_MutS"/>
</dbReference>
<dbReference type="InterPro" id="IPR007695">
    <property type="entry name" value="DNA_mismatch_repair_MutS-lik_N"/>
</dbReference>
<dbReference type="InterPro" id="IPR017261">
    <property type="entry name" value="DNA_mismatch_repair_MutS/MSH"/>
</dbReference>
<dbReference type="InterPro" id="IPR000432">
    <property type="entry name" value="DNA_mismatch_repair_MutS_C"/>
</dbReference>
<dbReference type="InterPro" id="IPR007861">
    <property type="entry name" value="DNA_mismatch_repair_MutS_clamp"/>
</dbReference>
<dbReference type="InterPro" id="IPR007696">
    <property type="entry name" value="DNA_mismatch_repair_MutS_core"/>
</dbReference>
<dbReference type="InterPro" id="IPR016151">
    <property type="entry name" value="DNA_mismatch_repair_MutS_N"/>
</dbReference>
<dbReference type="InterPro" id="IPR036187">
    <property type="entry name" value="DNA_mismatch_repair_MutS_sf"/>
</dbReference>
<dbReference type="InterPro" id="IPR007860">
    <property type="entry name" value="DNA_mmatch_repair_MutS_con_dom"/>
</dbReference>
<dbReference type="InterPro" id="IPR045076">
    <property type="entry name" value="MutS"/>
</dbReference>
<dbReference type="InterPro" id="IPR036678">
    <property type="entry name" value="MutS_con_dom_sf"/>
</dbReference>
<dbReference type="InterPro" id="IPR027417">
    <property type="entry name" value="P-loop_NTPase"/>
</dbReference>
<dbReference type="NCBIfam" id="TIGR01070">
    <property type="entry name" value="mutS1"/>
    <property type="match status" value="1"/>
</dbReference>
<dbReference type="NCBIfam" id="NF003810">
    <property type="entry name" value="PRK05399.1"/>
    <property type="match status" value="1"/>
</dbReference>
<dbReference type="PANTHER" id="PTHR11361:SF34">
    <property type="entry name" value="DNA MISMATCH REPAIR PROTEIN MSH1, MITOCHONDRIAL"/>
    <property type="match status" value="1"/>
</dbReference>
<dbReference type="PANTHER" id="PTHR11361">
    <property type="entry name" value="DNA MISMATCH REPAIR PROTEIN MUTS FAMILY MEMBER"/>
    <property type="match status" value="1"/>
</dbReference>
<dbReference type="Pfam" id="PF01624">
    <property type="entry name" value="MutS_I"/>
    <property type="match status" value="1"/>
</dbReference>
<dbReference type="Pfam" id="PF05188">
    <property type="entry name" value="MutS_II"/>
    <property type="match status" value="1"/>
</dbReference>
<dbReference type="Pfam" id="PF05192">
    <property type="entry name" value="MutS_III"/>
    <property type="match status" value="1"/>
</dbReference>
<dbReference type="Pfam" id="PF05190">
    <property type="entry name" value="MutS_IV"/>
    <property type="match status" value="1"/>
</dbReference>
<dbReference type="Pfam" id="PF00488">
    <property type="entry name" value="MutS_V"/>
    <property type="match status" value="1"/>
</dbReference>
<dbReference type="PIRSF" id="PIRSF037677">
    <property type="entry name" value="DNA_mis_repair_Msh6"/>
    <property type="match status" value="1"/>
</dbReference>
<dbReference type="SMART" id="SM00534">
    <property type="entry name" value="MUTSac"/>
    <property type="match status" value="1"/>
</dbReference>
<dbReference type="SMART" id="SM00533">
    <property type="entry name" value="MUTSd"/>
    <property type="match status" value="1"/>
</dbReference>
<dbReference type="SUPFAM" id="SSF55271">
    <property type="entry name" value="DNA repair protein MutS, domain I"/>
    <property type="match status" value="1"/>
</dbReference>
<dbReference type="SUPFAM" id="SSF53150">
    <property type="entry name" value="DNA repair protein MutS, domain II"/>
    <property type="match status" value="1"/>
</dbReference>
<dbReference type="SUPFAM" id="SSF48334">
    <property type="entry name" value="DNA repair protein MutS, domain III"/>
    <property type="match status" value="1"/>
</dbReference>
<dbReference type="SUPFAM" id="SSF52540">
    <property type="entry name" value="P-loop containing nucleoside triphosphate hydrolases"/>
    <property type="match status" value="1"/>
</dbReference>
<dbReference type="PROSITE" id="PS00486">
    <property type="entry name" value="DNA_MISMATCH_REPAIR_2"/>
    <property type="match status" value="1"/>
</dbReference>
<name>MUTS_CLOBK</name>
<reference key="1">
    <citation type="journal article" date="2007" name="PLoS ONE">
        <title>Analysis of the neurotoxin complex genes in Clostridium botulinum A1-A4 and B1 strains: BoNT/A3, /Ba4 and /B1 clusters are located within plasmids.</title>
        <authorList>
            <person name="Smith T.J."/>
            <person name="Hill K.K."/>
            <person name="Foley B.T."/>
            <person name="Detter J.C."/>
            <person name="Munk A.C."/>
            <person name="Bruce D.C."/>
            <person name="Doggett N.A."/>
            <person name="Smith L.A."/>
            <person name="Marks J.D."/>
            <person name="Xie G."/>
            <person name="Brettin T.S."/>
        </authorList>
    </citation>
    <scope>NUCLEOTIDE SEQUENCE [LARGE SCALE GENOMIC DNA]</scope>
    <source>
        <strain>Okra / Type B1</strain>
    </source>
</reference>
<proteinExistence type="inferred from homology"/>
<gene>
    <name evidence="1" type="primary">mutS</name>
    <name type="ordered locus">CLD_2840</name>
</gene>
<protein>
    <recommendedName>
        <fullName evidence="1">DNA mismatch repair protein MutS</fullName>
    </recommendedName>
</protein>
<sequence length="932" mass="106430">MGLTPMMRQYLEVKESCKDCILFFRLGDFYEMFFEDAKVASKELELVLTGRDCGLEERAPMCGIPYHAANTYIGRLVSAGYKIAICEQLEDPSASKGIVKRGIIKIITPGTYTDSSFLEENKNNYIMSFYLDDNMCAMSFADISTGEFNSTHSNFKEAVVLDEISKFAPREIVLEENIKESFIHTIKERFPNISISKIKEENFDYNIDNNLKEQFNNFNENEYETIVKKSANGLLYYIFHTQKNILSNINKIDYYSIVDYLTIDVNSRRNLEITENLREKTKKGSLLWVLDKTNTAMGGRQLRRWIEQPLINKNPIENRLNAVEELLNNISLQEDLKEDLKSIYDIERIVGKVASKSVNAKELISLKCSIGKVPYIKKYLSNFKSDLFLNMEQCIDTLEDIHKLLDKALLDNPSLSVKEGNIIKEGFNEEVDSLREAKSNGKKWIASLEQKEKEETGIKSLKVSYNKVFGYFIEITKANLNLVPEGRYIRKQTLSNAERYITPELKEMEEKILGAEEKLIDIEYKLFTKIRDFIEENIDRMQKTARIISDIDCLCSLATVALENNYIKPNINAKNEILIEEGRHPVVEKVIPKGEFISNDSLIDTKENQLILITGPNMAGKSTYMRQVALITIMAQIGSFVPAKKANISICDKIFTRIGASDDLAAGKSTFMVEMWEVSNILKNATSKSLVLLDEVGRGTSTYDGLSIAWSVIEYICNNKNLRCKTLFATHYHELTKLEDNIEGVKNYSVSVSELENEIVFLRKIIRGGADQSYGIEVAKLAGLPSPVINRAKEILQHIEGDKEENSLNITPSKEYKSKDYIEASKDTLNTKNNLESEIKHDTLSETNAATIVEDESTKEHLSSNKKQINCRINDEKSIKKEVAVDSFQINFEYIKRDKIIEEIKNIDILNMTPMEGFNKLYDIINKTKDID</sequence>
<keyword id="KW-0067">ATP-binding</keyword>
<keyword id="KW-0227">DNA damage</keyword>
<keyword id="KW-0234">DNA repair</keyword>
<keyword id="KW-0238">DNA-binding</keyword>
<keyword id="KW-0547">Nucleotide-binding</keyword>
<accession>B1IM68</accession>
<comment type="function">
    <text evidence="1">This protein is involved in the repair of mismatches in DNA. It is possible that it carries out the mismatch recognition step. This protein has a weak ATPase activity.</text>
</comment>
<comment type="similarity">
    <text evidence="1">Belongs to the DNA mismatch repair MutS family.</text>
</comment>
<evidence type="ECO:0000255" key="1">
    <source>
        <dbReference type="HAMAP-Rule" id="MF_00096"/>
    </source>
</evidence>
<organism>
    <name type="scientific">Clostridium botulinum (strain Okra / Type B1)</name>
    <dbReference type="NCBI Taxonomy" id="498213"/>
    <lineage>
        <taxon>Bacteria</taxon>
        <taxon>Bacillati</taxon>
        <taxon>Bacillota</taxon>
        <taxon>Clostridia</taxon>
        <taxon>Eubacteriales</taxon>
        <taxon>Clostridiaceae</taxon>
        <taxon>Clostridium</taxon>
    </lineage>
</organism>
<feature type="chain" id="PRO_0000335141" description="DNA mismatch repair protein MutS">
    <location>
        <begin position="1"/>
        <end position="932"/>
    </location>
</feature>
<feature type="binding site" evidence="1">
    <location>
        <begin position="615"/>
        <end position="622"/>
    </location>
    <ligand>
        <name>ATP</name>
        <dbReference type="ChEBI" id="CHEBI:30616"/>
    </ligand>
</feature>